<accession>B9KES1</accession>
<comment type="function">
    <text evidence="1">Produces ATP from ADP in the presence of a proton gradient across the membrane. The alpha chain is a regulatory subunit.</text>
</comment>
<comment type="catalytic activity">
    <reaction evidence="1">
        <text>ATP + H2O + 4 H(+)(in) = ADP + phosphate + 5 H(+)(out)</text>
        <dbReference type="Rhea" id="RHEA:57720"/>
        <dbReference type="ChEBI" id="CHEBI:15377"/>
        <dbReference type="ChEBI" id="CHEBI:15378"/>
        <dbReference type="ChEBI" id="CHEBI:30616"/>
        <dbReference type="ChEBI" id="CHEBI:43474"/>
        <dbReference type="ChEBI" id="CHEBI:456216"/>
        <dbReference type="EC" id="7.1.2.2"/>
    </reaction>
</comment>
<comment type="subunit">
    <text evidence="1">F-type ATPases have 2 components, CF(1) - the catalytic core - and CF(0) - the membrane proton channel. CF(1) has five subunits: alpha(3), beta(3), gamma(1), delta(1), epsilon(1). CF(0) has three main subunits: a(1), b(2) and c(9-12). The alpha and beta chains form an alternating ring which encloses part of the gamma chain. CF(1) is attached to CF(0) by a central stalk formed by the gamma and epsilon chains, while a peripheral stalk is formed by the delta and b chains.</text>
</comment>
<comment type="subcellular location">
    <subcellularLocation>
        <location evidence="1">Cell inner membrane</location>
        <topology evidence="1">Peripheral membrane protein</topology>
    </subcellularLocation>
</comment>
<comment type="similarity">
    <text evidence="1">Belongs to the ATPase alpha/beta chains family.</text>
</comment>
<gene>
    <name evidence="1" type="primary">atpA</name>
    <name type="ordered locus">Cla_0193</name>
</gene>
<evidence type="ECO:0000255" key="1">
    <source>
        <dbReference type="HAMAP-Rule" id="MF_01346"/>
    </source>
</evidence>
<organism>
    <name type="scientific">Campylobacter lari (strain RM2100 / D67 / ATCC BAA-1060)</name>
    <dbReference type="NCBI Taxonomy" id="306263"/>
    <lineage>
        <taxon>Bacteria</taxon>
        <taxon>Pseudomonadati</taxon>
        <taxon>Campylobacterota</taxon>
        <taxon>Epsilonproteobacteria</taxon>
        <taxon>Campylobacterales</taxon>
        <taxon>Campylobacteraceae</taxon>
        <taxon>Campylobacter</taxon>
    </lineage>
</organism>
<proteinExistence type="inferred from homology"/>
<feature type="chain" id="PRO_1000166527" description="ATP synthase subunit alpha">
    <location>
        <begin position="1"/>
        <end position="501"/>
    </location>
</feature>
<feature type="binding site" evidence="1">
    <location>
        <begin position="169"/>
        <end position="176"/>
    </location>
    <ligand>
        <name>ATP</name>
        <dbReference type="ChEBI" id="CHEBI:30616"/>
    </ligand>
</feature>
<feature type="site" description="Required for activity" evidence="1">
    <location>
        <position position="362"/>
    </location>
</feature>
<name>ATPA_CAMLR</name>
<keyword id="KW-0066">ATP synthesis</keyword>
<keyword id="KW-0067">ATP-binding</keyword>
<keyword id="KW-0997">Cell inner membrane</keyword>
<keyword id="KW-1003">Cell membrane</keyword>
<keyword id="KW-0139">CF(1)</keyword>
<keyword id="KW-0375">Hydrogen ion transport</keyword>
<keyword id="KW-0406">Ion transport</keyword>
<keyword id="KW-0472">Membrane</keyword>
<keyword id="KW-0547">Nucleotide-binding</keyword>
<keyword id="KW-1185">Reference proteome</keyword>
<keyword id="KW-1278">Translocase</keyword>
<keyword id="KW-0813">Transport</keyword>
<protein>
    <recommendedName>
        <fullName evidence="1">ATP synthase subunit alpha</fullName>
        <ecNumber evidence="1">7.1.2.2</ecNumber>
    </recommendedName>
    <alternativeName>
        <fullName evidence="1">ATP synthase F1 sector subunit alpha</fullName>
    </alternativeName>
    <alternativeName>
        <fullName evidence="1">F-ATPase subunit alpha</fullName>
    </alternativeName>
</protein>
<sequence>MKFKADEISSIIKERIEKFDFNLEIEETGKIISVADGVAKVYGLKNAMAGEMVEFENGEKGMVLNLEESSVGIVILGKGLGLKEGSSVKRLKKLLKVPVGDALIGRVVNALGEPIDAKGVIEASEYRFVEEKAKGIMARKSVHEPLHTGIKAIDALVPIGRGQRELIIGDRQTGKTTVAIDTIISQKGKDVICIYVAIGQKQSTVAQVVKKLEEYGAMDYTIVVNAGASDPAALQYLAPYAGVTMGEYFRDNSRHALIVYDDLSKHAVAYREMSLILRRPPGREAYPGDVFYLHSRLLERASKLSDELGAGSLTALPIIETQAGDVSAYIPTNVISITDGQIFLETDLFNSGIRPAINVGLSVSRVGGAAQIKATKQVSGTLRLDLAQYRELQAFAQFASDLDEASRKQLERGQRMVEVLKQPPYSPLSPENQVVIIFAGTKGYLDDVAVSKIGEFEAALYPFIEAKYPEIFEQIRTKKALDKDLEEKLAKALSEFKANHI</sequence>
<reference key="1">
    <citation type="journal article" date="2008" name="Foodborne Pathog. Dis.">
        <title>The complete genome sequence and analysis of the human pathogen Campylobacter lari.</title>
        <authorList>
            <person name="Miller W.G."/>
            <person name="Wang G."/>
            <person name="Binnewies T.T."/>
            <person name="Parker C.T."/>
        </authorList>
    </citation>
    <scope>NUCLEOTIDE SEQUENCE [LARGE SCALE GENOMIC DNA]</scope>
    <source>
        <strain>RM2100 / D67 / ATCC BAA-1060</strain>
    </source>
</reference>
<dbReference type="EC" id="7.1.2.2" evidence="1"/>
<dbReference type="EMBL" id="CP000932">
    <property type="protein sequence ID" value="ACM63556.1"/>
    <property type="molecule type" value="Genomic_DNA"/>
</dbReference>
<dbReference type="RefSeq" id="WP_012660940.1">
    <property type="nucleotide sequence ID" value="NC_012039.1"/>
</dbReference>
<dbReference type="SMR" id="B9KES1"/>
<dbReference type="STRING" id="306263.Cla_0193"/>
<dbReference type="KEGG" id="cla:CLA_0193"/>
<dbReference type="eggNOG" id="COG0056">
    <property type="taxonomic scope" value="Bacteria"/>
</dbReference>
<dbReference type="HOGENOM" id="CLU_010091_2_1_7"/>
<dbReference type="Proteomes" id="UP000007727">
    <property type="component" value="Chromosome"/>
</dbReference>
<dbReference type="GO" id="GO:0005886">
    <property type="term" value="C:plasma membrane"/>
    <property type="evidence" value="ECO:0007669"/>
    <property type="project" value="UniProtKB-SubCell"/>
</dbReference>
<dbReference type="GO" id="GO:0045259">
    <property type="term" value="C:proton-transporting ATP synthase complex"/>
    <property type="evidence" value="ECO:0007669"/>
    <property type="project" value="UniProtKB-KW"/>
</dbReference>
<dbReference type="GO" id="GO:0043531">
    <property type="term" value="F:ADP binding"/>
    <property type="evidence" value="ECO:0007669"/>
    <property type="project" value="TreeGrafter"/>
</dbReference>
<dbReference type="GO" id="GO:0005524">
    <property type="term" value="F:ATP binding"/>
    <property type="evidence" value="ECO:0007669"/>
    <property type="project" value="UniProtKB-UniRule"/>
</dbReference>
<dbReference type="GO" id="GO:0046933">
    <property type="term" value="F:proton-transporting ATP synthase activity, rotational mechanism"/>
    <property type="evidence" value="ECO:0007669"/>
    <property type="project" value="UniProtKB-UniRule"/>
</dbReference>
<dbReference type="CDD" id="cd18113">
    <property type="entry name" value="ATP-synt_F1_alpha_C"/>
    <property type="match status" value="1"/>
</dbReference>
<dbReference type="CDD" id="cd18116">
    <property type="entry name" value="ATP-synt_F1_alpha_N"/>
    <property type="match status" value="1"/>
</dbReference>
<dbReference type="CDD" id="cd01132">
    <property type="entry name" value="F1-ATPase_alpha_CD"/>
    <property type="match status" value="1"/>
</dbReference>
<dbReference type="FunFam" id="1.20.150.20:FF:000001">
    <property type="entry name" value="ATP synthase subunit alpha"/>
    <property type="match status" value="1"/>
</dbReference>
<dbReference type="FunFam" id="2.40.30.20:FF:000001">
    <property type="entry name" value="ATP synthase subunit alpha"/>
    <property type="match status" value="1"/>
</dbReference>
<dbReference type="FunFam" id="3.40.50.300:FF:000002">
    <property type="entry name" value="ATP synthase subunit alpha"/>
    <property type="match status" value="1"/>
</dbReference>
<dbReference type="Gene3D" id="2.40.30.20">
    <property type="match status" value="1"/>
</dbReference>
<dbReference type="Gene3D" id="1.20.150.20">
    <property type="entry name" value="ATP synthase alpha/beta chain, C-terminal domain"/>
    <property type="match status" value="1"/>
</dbReference>
<dbReference type="Gene3D" id="3.40.50.300">
    <property type="entry name" value="P-loop containing nucleotide triphosphate hydrolases"/>
    <property type="match status" value="1"/>
</dbReference>
<dbReference type="HAMAP" id="MF_01346">
    <property type="entry name" value="ATP_synth_alpha_bact"/>
    <property type="match status" value="1"/>
</dbReference>
<dbReference type="InterPro" id="IPR023366">
    <property type="entry name" value="ATP_synth_asu-like_sf"/>
</dbReference>
<dbReference type="InterPro" id="IPR000793">
    <property type="entry name" value="ATP_synth_asu_C"/>
</dbReference>
<dbReference type="InterPro" id="IPR038376">
    <property type="entry name" value="ATP_synth_asu_C_sf"/>
</dbReference>
<dbReference type="InterPro" id="IPR033732">
    <property type="entry name" value="ATP_synth_F1_a_nt-bd_dom"/>
</dbReference>
<dbReference type="InterPro" id="IPR005294">
    <property type="entry name" value="ATP_synth_F1_asu"/>
</dbReference>
<dbReference type="InterPro" id="IPR020003">
    <property type="entry name" value="ATPase_a/bsu_AS"/>
</dbReference>
<dbReference type="InterPro" id="IPR004100">
    <property type="entry name" value="ATPase_F1/V1/A1_a/bsu_N"/>
</dbReference>
<dbReference type="InterPro" id="IPR036121">
    <property type="entry name" value="ATPase_F1/V1/A1_a/bsu_N_sf"/>
</dbReference>
<dbReference type="InterPro" id="IPR000194">
    <property type="entry name" value="ATPase_F1/V1/A1_a/bsu_nucl-bd"/>
</dbReference>
<dbReference type="InterPro" id="IPR027417">
    <property type="entry name" value="P-loop_NTPase"/>
</dbReference>
<dbReference type="NCBIfam" id="TIGR00962">
    <property type="entry name" value="atpA"/>
    <property type="match status" value="1"/>
</dbReference>
<dbReference type="NCBIfam" id="NF009884">
    <property type="entry name" value="PRK13343.1"/>
    <property type="match status" value="1"/>
</dbReference>
<dbReference type="PANTHER" id="PTHR48082">
    <property type="entry name" value="ATP SYNTHASE SUBUNIT ALPHA, MITOCHONDRIAL"/>
    <property type="match status" value="1"/>
</dbReference>
<dbReference type="PANTHER" id="PTHR48082:SF2">
    <property type="entry name" value="ATP SYNTHASE SUBUNIT ALPHA, MITOCHONDRIAL"/>
    <property type="match status" value="1"/>
</dbReference>
<dbReference type="Pfam" id="PF00006">
    <property type="entry name" value="ATP-synt_ab"/>
    <property type="match status" value="1"/>
</dbReference>
<dbReference type="Pfam" id="PF00306">
    <property type="entry name" value="ATP-synt_ab_C"/>
    <property type="match status" value="1"/>
</dbReference>
<dbReference type="Pfam" id="PF02874">
    <property type="entry name" value="ATP-synt_ab_N"/>
    <property type="match status" value="1"/>
</dbReference>
<dbReference type="PIRSF" id="PIRSF039088">
    <property type="entry name" value="F_ATPase_subunit_alpha"/>
    <property type="match status" value="1"/>
</dbReference>
<dbReference type="SUPFAM" id="SSF47917">
    <property type="entry name" value="C-terminal domain of alpha and beta subunits of F1 ATP synthase"/>
    <property type="match status" value="1"/>
</dbReference>
<dbReference type="SUPFAM" id="SSF50615">
    <property type="entry name" value="N-terminal domain of alpha and beta subunits of F1 ATP synthase"/>
    <property type="match status" value="1"/>
</dbReference>
<dbReference type="SUPFAM" id="SSF52540">
    <property type="entry name" value="P-loop containing nucleoside triphosphate hydrolases"/>
    <property type="match status" value="1"/>
</dbReference>
<dbReference type="PROSITE" id="PS00152">
    <property type="entry name" value="ATPASE_ALPHA_BETA"/>
    <property type="match status" value="1"/>
</dbReference>